<gene>
    <name evidence="1" type="primary">purH</name>
    <name type="ordered locus">YPTB0300</name>
</gene>
<accession>Q66FN5</accession>
<proteinExistence type="inferred from homology"/>
<dbReference type="EC" id="2.1.2.3" evidence="1"/>
<dbReference type="EC" id="3.5.4.10" evidence="1"/>
<dbReference type="EMBL" id="BX936398">
    <property type="protein sequence ID" value="CAH19540.1"/>
    <property type="molecule type" value="Genomic_DNA"/>
</dbReference>
<dbReference type="RefSeq" id="WP_011191559.1">
    <property type="nucleotide sequence ID" value="NC_006155.1"/>
</dbReference>
<dbReference type="SMR" id="Q66FN5"/>
<dbReference type="GeneID" id="49787708"/>
<dbReference type="KEGG" id="ypo:BZ17_2273"/>
<dbReference type="KEGG" id="yps:YPTB0300"/>
<dbReference type="PATRIC" id="fig|273123.14.peg.2404"/>
<dbReference type="UniPathway" id="UPA00074">
    <property type="reaction ID" value="UER00133"/>
</dbReference>
<dbReference type="UniPathway" id="UPA00074">
    <property type="reaction ID" value="UER00135"/>
</dbReference>
<dbReference type="Proteomes" id="UP000001011">
    <property type="component" value="Chromosome"/>
</dbReference>
<dbReference type="GO" id="GO:0005829">
    <property type="term" value="C:cytosol"/>
    <property type="evidence" value="ECO:0007669"/>
    <property type="project" value="TreeGrafter"/>
</dbReference>
<dbReference type="GO" id="GO:0003937">
    <property type="term" value="F:IMP cyclohydrolase activity"/>
    <property type="evidence" value="ECO:0007669"/>
    <property type="project" value="UniProtKB-UniRule"/>
</dbReference>
<dbReference type="GO" id="GO:0004643">
    <property type="term" value="F:phosphoribosylaminoimidazolecarboxamide formyltransferase activity"/>
    <property type="evidence" value="ECO:0007669"/>
    <property type="project" value="UniProtKB-UniRule"/>
</dbReference>
<dbReference type="GO" id="GO:0006189">
    <property type="term" value="P:'de novo' IMP biosynthetic process"/>
    <property type="evidence" value="ECO:0007669"/>
    <property type="project" value="UniProtKB-UniRule"/>
</dbReference>
<dbReference type="CDD" id="cd01421">
    <property type="entry name" value="IMPCH"/>
    <property type="match status" value="1"/>
</dbReference>
<dbReference type="FunFam" id="3.40.140.20:FF:000001">
    <property type="entry name" value="Bifunctional purine biosynthesis protein PurH"/>
    <property type="match status" value="1"/>
</dbReference>
<dbReference type="FunFam" id="3.40.140.20:FF:000002">
    <property type="entry name" value="Bifunctional purine biosynthesis protein PurH"/>
    <property type="match status" value="1"/>
</dbReference>
<dbReference type="FunFam" id="3.40.50.1380:FF:000001">
    <property type="entry name" value="Bifunctional purine biosynthesis protein PurH"/>
    <property type="match status" value="1"/>
</dbReference>
<dbReference type="Gene3D" id="3.40.140.20">
    <property type="match status" value="2"/>
</dbReference>
<dbReference type="Gene3D" id="3.40.50.1380">
    <property type="entry name" value="Methylglyoxal synthase-like domain"/>
    <property type="match status" value="1"/>
</dbReference>
<dbReference type="HAMAP" id="MF_00139">
    <property type="entry name" value="PurH"/>
    <property type="match status" value="1"/>
</dbReference>
<dbReference type="InterPro" id="IPR024051">
    <property type="entry name" value="AICAR_Tfase_dup_dom_sf"/>
</dbReference>
<dbReference type="InterPro" id="IPR016193">
    <property type="entry name" value="Cytidine_deaminase-like"/>
</dbReference>
<dbReference type="InterPro" id="IPR011607">
    <property type="entry name" value="MGS-like_dom"/>
</dbReference>
<dbReference type="InterPro" id="IPR036914">
    <property type="entry name" value="MGS-like_dom_sf"/>
</dbReference>
<dbReference type="InterPro" id="IPR002695">
    <property type="entry name" value="PurH-like"/>
</dbReference>
<dbReference type="NCBIfam" id="NF002049">
    <property type="entry name" value="PRK00881.1"/>
    <property type="match status" value="1"/>
</dbReference>
<dbReference type="NCBIfam" id="TIGR00355">
    <property type="entry name" value="purH"/>
    <property type="match status" value="1"/>
</dbReference>
<dbReference type="PANTHER" id="PTHR11692:SF0">
    <property type="entry name" value="BIFUNCTIONAL PURINE BIOSYNTHESIS PROTEIN ATIC"/>
    <property type="match status" value="1"/>
</dbReference>
<dbReference type="PANTHER" id="PTHR11692">
    <property type="entry name" value="BIFUNCTIONAL PURINE BIOSYNTHESIS PROTEIN PURH"/>
    <property type="match status" value="1"/>
</dbReference>
<dbReference type="Pfam" id="PF01808">
    <property type="entry name" value="AICARFT_IMPCHas"/>
    <property type="match status" value="1"/>
</dbReference>
<dbReference type="Pfam" id="PF02142">
    <property type="entry name" value="MGS"/>
    <property type="match status" value="1"/>
</dbReference>
<dbReference type="PIRSF" id="PIRSF000414">
    <property type="entry name" value="AICARFT_IMPCHas"/>
    <property type="match status" value="1"/>
</dbReference>
<dbReference type="SMART" id="SM00798">
    <property type="entry name" value="AICARFT_IMPCHas"/>
    <property type="match status" value="1"/>
</dbReference>
<dbReference type="SMART" id="SM00851">
    <property type="entry name" value="MGS"/>
    <property type="match status" value="1"/>
</dbReference>
<dbReference type="SUPFAM" id="SSF53927">
    <property type="entry name" value="Cytidine deaminase-like"/>
    <property type="match status" value="1"/>
</dbReference>
<dbReference type="SUPFAM" id="SSF52335">
    <property type="entry name" value="Methylglyoxal synthase-like"/>
    <property type="match status" value="1"/>
</dbReference>
<dbReference type="PROSITE" id="PS51855">
    <property type="entry name" value="MGS"/>
    <property type="match status" value="1"/>
</dbReference>
<comment type="catalytic activity">
    <reaction evidence="1">
        <text>(6R)-10-formyltetrahydrofolate + 5-amino-1-(5-phospho-beta-D-ribosyl)imidazole-4-carboxamide = 5-formamido-1-(5-phospho-D-ribosyl)imidazole-4-carboxamide + (6S)-5,6,7,8-tetrahydrofolate</text>
        <dbReference type="Rhea" id="RHEA:22192"/>
        <dbReference type="ChEBI" id="CHEBI:57453"/>
        <dbReference type="ChEBI" id="CHEBI:58467"/>
        <dbReference type="ChEBI" id="CHEBI:58475"/>
        <dbReference type="ChEBI" id="CHEBI:195366"/>
        <dbReference type="EC" id="2.1.2.3"/>
    </reaction>
</comment>
<comment type="catalytic activity">
    <reaction evidence="1">
        <text>IMP + H2O = 5-formamido-1-(5-phospho-D-ribosyl)imidazole-4-carboxamide</text>
        <dbReference type="Rhea" id="RHEA:18445"/>
        <dbReference type="ChEBI" id="CHEBI:15377"/>
        <dbReference type="ChEBI" id="CHEBI:58053"/>
        <dbReference type="ChEBI" id="CHEBI:58467"/>
        <dbReference type="EC" id="3.5.4.10"/>
    </reaction>
</comment>
<comment type="pathway">
    <text evidence="1">Purine metabolism; IMP biosynthesis via de novo pathway; 5-formamido-1-(5-phospho-D-ribosyl)imidazole-4-carboxamide from 5-amino-1-(5-phospho-D-ribosyl)imidazole-4-carboxamide (10-formyl THF route): step 1/1.</text>
</comment>
<comment type="pathway">
    <text evidence="1">Purine metabolism; IMP biosynthesis via de novo pathway; IMP from 5-formamido-1-(5-phospho-D-ribosyl)imidazole-4-carboxamide: step 1/1.</text>
</comment>
<comment type="domain">
    <text evidence="1">The IMP cyclohydrolase activity resides in the N-terminal region.</text>
</comment>
<comment type="similarity">
    <text evidence="1">Belongs to the PurH family.</text>
</comment>
<protein>
    <recommendedName>
        <fullName evidence="1">Bifunctional purine biosynthesis protein PurH</fullName>
    </recommendedName>
    <domain>
        <recommendedName>
            <fullName evidence="1">Phosphoribosylaminoimidazolecarboxamide formyltransferase</fullName>
            <ecNumber evidence="1">2.1.2.3</ecNumber>
        </recommendedName>
        <alternativeName>
            <fullName evidence="1">AICAR transformylase</fullName>
        </alternativeName>
    </domain>
    <domain>
        <recommendedName>
            <fullName evidence="1">IMP cyclohydrolase</fullName>
            <ecNumber evidence="1">3.5.4.10</ecNumber>
        </recommendedName>
        <alternativeName>
            <fullName evidence="1">ATIC</fullName>
        </alternativeName>
        <alternativeName>
            <fullName evidence="1">IMP synthase</fullName>
        </alternativeName>
        <alternativeName>
            <fullName evidence="1">Inosinicase</fullName>
        </alternativeName>
    </domain>
</protein>
<keyword id="KW-0378">Hydrolase</keyword>
<keyword id="KW-0511">Multifunctional enzyme</keyword>
<keyword id="KW-0658">Purine biosynthesis</keyword>
<keyword id="KW-0808">Transferase</keyword>
<evidence type="ECO:0000255" key="1">
    <source>
        <dbReference type="HAMAP-Rule" id="MF_00139"/>
    </source>
</evidence>
<evidence type="ECO:0000255" key="2">
    <source>
        <dbReference type="PROSITE-ProRule" id="PRU01202"/>
    </source>
</evidence>
<reference key="1">
    <citation type="journal article" date="2004" name="Proc. Natl. Acad. Sci. U.S.A.">
        <title>Insights into the evolution of Yersinia pestis through whole-genome comparison with Yersinia pseudotuberculosis.</title>
        <authorList>
            <person name="Chain P.S.G."/>
            <person name="Carniel E."/>
            <person name="Larimer F.W."/>
            <person name="Lamerdin J."/>
            <person name="Stoutland P.O."/>
            <person name="Regala W.M."/>
            <person name="Georgescu A.M."/>
            <person name="Vergez L.M."/>
            <person name="Land M.L."/>
            <person name="Motin V.L."/>
            <person name="Brubaker R.R."/>
            <person name="Fowler J."/>
            <person name="Hinnebusch J."/>
            <person name="Marceau M."/>
            <person name="Medigue C."/>
            <person name="Simonet M."/>
            <person name="Chenal-Francisque V."/>
            <person name="Souza B."/>
            <person name="Dacheux D."/>
            <person name="Elliott J.M."/>
            <person name="Derbise A."/>
            <person name="Hauser L.J."/>
            <person name="Garcia E."/>
        </authorList>
    </citation>
    <scope>NUCLEOTIDE SEQUENCE [LARGE SCALE GENOMIC DNA]</scope>
    <source>
        <strain>IP32953</strain>
    </source>
</reference>
<sequence length="529" mass="57151">MQQRRPIRRALLSVSDKAGIIEFAQALSQRGIELLSTGGTARLLADAGLPVTEVSDYTGFPEMMDGRVKTLHPKVHGGILGRRGQDDGIMAQHGIQPIDIVVVNLYPFAQTVARPDCSLEDAVENIDIGGPTMVRSAAKNHKDVAIVVKSSDYPAIITELDNNDGSLTYPTRFNLAIKAFEHTAAYDSMIANYFGTLVPPYHGDTEQPSGHFPRTLNLNYIKKQDMRYGENSHQQAAFYIEEDVKEASVATAQQLQGKALSYNNIADTDAALECVKEFSEPACVIVKHANPCGVAIGDSILAAYERAYQTDPTSAFGGIIAFNRELDAATANAIISRQFVEVIIAPTVSSDALALLAAKQNVRVLTCGQWQARSAGLDFKRVNGGLLVQERDLGMVTAADLRVVSKRQPTEQELRDALFCWKVAKFVKSNAIVYARDNMTIGIGAGQMSRVYSAKIAGIKAADEGLEVAGSAMASDAFFPFRDGIDAAAAVGITCVIQPGGSIRDDEVIAAADEHGIAMIFTDMRHFRH</sequence>
<name>PUR9_YERPS</name>
<feature type="chain" id="PRO_1000018994" description="Bifunctional purine biosynthesis protein PurH">
    <location>
        <begin position="1"/>
        <end position="529"/>
    </location>
</feature>
<feature type="domain" description="MGS-like" evidence="2">
    <location>
        <begin position="1"/>
        <end position="148"/>
    </location>
</feature>
<organism>
    <name type="scientific">Yersinia pseudotuberculosis serotype I (strain IP32953)</name>
    <dbReference type="NCBI Taxonomy" id="273123"/>
    <lineage>
        <taxon>Bacteria</taxon>
        <taxon>Pseudomonadati</taxon>
        <taxon>Pseudomonadota</taxon>
        <taxon>Gammaproteobacteria</taxon>
        <taxon>Enterobacterales</taxon>
        <taxon>Yersiniaceae</taxon>
        <taxon>Yersinia</taxon>
    </lineage>
</organism>